<proteinExistence type="inferred from homology"/>
<name>PANC_POLNS</name>
<dbReference type="EC" id="6.3.2.1" evidence="1"/>
<dbReference type="EMBL" id="CP001010">
    <property type="protein sequence ID" value="ACB44355.1"/>
    <property type="molecule type" value="Genomic_DNA"/>
</dbReference>
<dbReference type="SMR" id="B1XVH8"/>
<dbReference type="STRING" id="452638.Pnec_1212"/>
<dbReference type="KEGG" id="pne:Pnec_1212"/>
<dbReference type="eggNOG" id="COG0414">
    <property type="taxonomic scope" value="Bacteria"/>
</dbReference>
<dbReference type="HOGENOM" id="CLU_047148_0_0_4"/>
<dbReference type="OrthoDB" id="9773087at2"/>
<dbReference type="UniPathway" id="UPA00028">
    <property type="reaction ID" value="UER00005"/>
</dbReference>
<dbReference type="GO" id="GO:0005829">
    <property type="term" value="C:cytosol"/>
    <property type="evidence" value="ECO:0007669"/>
    <property type="project" value="TreeGrafter"/>
</dbReference>
<dbReference type="GO" id="GO:0005524">
    <property type="term" value="F:ATP binding"/>
    <property type="evidence" value="ECO:0007669"/>
    <property type="project" value="UniProtKB-KW"/>
</dbReference>
<dbReference type="GO" id="GO:0004592">
    <property type="term" value="F:pantoate-beta-alanine ligase activity"/>
    <property type="evidence" value="ECO:0007669"/>
    <property type="project" value="UniProtKB-UniRule"/>
</dbReference>
<dbReference type="GO" id="GO:0015940">
    <property type="term" value="P:pantothenate biosynthetic process"/>
    <property type="evidence" value="ECO:0007669"/>
    <property type="project" value="UniProtKB-UniRule"/>
</dbReference>
<dbReference type="CDD" id="cd00560">
    <property type="entry name" value="PanC"/>
    <property type="match status" value="1"/>
</dbReference>
<dbReference type="Gene3D" id="3.40.50.620">
    <property type="entry name" value="HUPs"/>
    <property type="match status" value="1"/>
</dbReference>
<dbReference type="Gene3D" id="3.30.1300.10">
    <property type="entry name" value="Pantoate-beta-alanine ligase, C-terminal domain"/>
    <property type="match status" value="1"/>
</dbReference>
<dbReference type="HAMAP" id="MF_00158">
    <property type="entry name" value="PanC"/>
    <property type="match status" value="1"/>
</dbReference>
<dbReference type="InterPro" id="IPR004821">
    <property type="entry name" value="Cyt_trans-like"/>
</dbReference>
<dbReference type="InterPro" id="IPR003721">
    <property type="entry name" value="Pantoate_ligase"/>
</dbReference>
<dbReference type="InterPro" id="IPR042176">
    <property type="entry name" value="Pantoate_ligase_C"/>
</dbReference>
<dbReference type="InterPro" id="IPR014729">
    <property type="entry name" value="Rossmann-like_a/b/a_fold"/>
</dbReference>
<dbReference type="NCBIfam" id="TIGR00125">
    <property type="entry name" value="cyt_tran_rel"/>
    <property type="match status" value="1"/>
</dbReference>
<dbReference type="NCBIfam" id="TIGR00018">
    <property type="entry name" value="panC"/>
    <property type="match status" value="1"/>
</dbReference>
<dbReference type="PANTHER" id="PTHR21299">
    <property type="entry name" value="CYTIDYLATE KINASE/PANTOATE-BETA-ALANINE LIGASE"/>
    <property type="match status" value="1"/>
</dbReference>
<dbReference type="PANTHER" id="PTHR21299:SF1">
    <property type="entry name" value="PANTOATE--BETA-ALANINE LIGASE"/>
    <property type="match status" value="1"/>
</dbReference>
<dbReference type="Pfam" id="PF02569">
    <property type="entry name" value="Pantoate_ligase"/>
    <property type="match status" value="1"/>
</dbReference>
<dbReference type="SUPFAM" id="SSF52374">
    <property type="entry name" value="Nucleotidylyl transferase"/>
    <property type="match status" value="1"/>
</dbReference>
<organism>
    <name type="scientific">Polynucleobacter necessarius subsp. necessarius (strain STIR1)</name>
    <dbReference type="NCBI Taxonomy" id="452638"/>
    <lineage>
        <taxon>Bacteria</taxon>
        <taxon>Pseudomonadati</taxon>
        <taxon>Pseudomonadota</taxon>
        <taxon>Betaproteobacteria</taxon>
        <taxon>Burkholderiales</taxon>
        <taxon>Burkholderiaceae</taxon>
        <taxon>Polynucleobacter</taxon>
    </lineage>
</organism>
<gene>
    <name evidence="1" type="primary">panC</name>
    <name type="ordered locus">Pnec_1212</name>
</gene>
<accession>B1XVH8</accession>
<protein>
    <recommendedName>
        <fullName evidence="1">Pantothenate synthetase</fullName>
        <shortName evidence="1">PS</shortName>
        <ecNumber evidence="1">6.3.2.1</ecNumber>
    </recommendedName>
    <alternativeName>
        <fullName evidence="1">Pantoate--beta-alanine ligase</fullName>
    </alternativeName>
    <alternativeName>
        <fullName evidence="1">Pantoate-activating enzyme</fullName>
    </alternativeName>
</protein>
<feature type="chain" id="PRO_1000097085" description="Pantothenate synthetase">
    <location>
        <begin position="1"/>
        <end position="283"/>
    </location>
</feature>
<feature type="active site" description="Proton donor" evidence="1">
    <location>
        <position position="33"/>
    </location>
</feature>
<feature type="binding site" evidence="1">
    <location>
        <begin position="26"/>
        <end position="33"/>
    </location>
    <ligand>
        <name>ATP</name>
        <dbReference type="ChEBI" id="CHEBI:30616"/>
    </ligand>
</feature>
<feature type="binding site" evidence="1">
    <location>
        <position position="57"/>
    </location>
    <ligand>
        <name>(R)-pantoate</name>
        <dbReference type="ChEBI" id="CHEBI:15980"/>
    </ligand>
</feature>
<feature type="binding site" evidence="1">
    <location>
        <position position="57"/>
    </location>
    <ligand>
        <name>beta-alanine</name>
        <dbReference type="ChEBI" id="CHEBI:57966"/>
    </ligand>
</feature>
<feature type="binding site" evidence="1">
    <location>
        <begin position="144"/>
        <end position="147"/>
    </location>
    <ligand>
        <name>ATP</name>
        <dbReference type="ChEBI" id="CHEBI:30616"/>
    </ligand>
</feature>
<feature type="binding site" evidence="1">
    <location>
        <position position="150"/>
    </location>
    <ligand>
        <name>(R)-pantoate</name>
        <dbReference type="ChEBI" id="CHEBI:15980"/>
    </ligand>
</feature>
<feature type="binding site" evidence="1">
    <location>
        <position position="173"/>
    </location>
    <ligand>
        <name>ATP</name>
        <dbReference type="ChEBI" id="CHEBI:30616"/>
    </ligand>
</feature>
<feature type="binding site" evidence="1">
    <location>
        <begin position="181"/>
        <end position="184"/>
    </location>
    <ligand>
        <name>ATP</name>
        <dbReference type="ChEBI" id="CHEBI:30616"/>
    </ligand>
</feature>
<evidence type="ECO:0000255" key="1">
    <source>
        <dbReference type="HAMAP-Rule" id="MF_00158"/>
    </source>
</evidence>
<keyword id="KW-0067">ATP-binding</keyword>
<keyword id="KW-0963">Cytoplasm</keyword>
<keyword id="KW-0436">Ligase</keyword>
<keyword id="KW-0547">Nucleotide-binding</keyword>
<keyword id="KW-0566">Pantothenate biosynthesis</keyword>
<comment type="function">
    <text evidence="1">Catalyzes the condensation of pantoate with beta-alanine in an ATP-dependent reaction via a pantoyl-adenylate intermediate.</text>
</comment>
<comment type="catalytic activity">
    <reaction evidence="1">
        <text>(R)-pantoate + beta-alanine + ATP = (R)-pantothenate + AMP + diphosphate + H(+)</text>
        <dbReference type="Rhea" id="RHEA:10912"/>
        <dbReference type="ChEBI" id="CHEBI:15378"/>
        <dbReference type="ChEBI" id="CHEBI:15980"/>
        <dbReference type="ChEBI" id="CHEBI:29032"/>
        <dbReference type="ChEBI" id="CHEBI:30616"/>
        <dbReference type="ChEBI" id="CHEBI:33019"/>
        <dbReference type="ChEBI" id="CHEBI:57966"/>
        <dbReference type="ChEBI" id="CHEBI:456215"/>
        <dbReference type="EC" id="6.3.2.1"/>
    </reaction>
</comment>
<comment type="pathway">
    <text evidence="1">Cofactor biosynthesis; (R)-pantothenate biosynthesis; (R)-pantothenate from (R)-pantoate and beta-alanine: step 1/1.</text>
</comment>
<comment type="subunit">
    <text evidence="1">Homodimer.</text>
</comment>
<comment type="subcellular location">
    <subcellularLocation>
        <location evidence="1">Cytoplasm</location>
    </subcellularLocation>
</comment>
<comment type="miscellaneous">
    <text evidence="1">The reaction proceeds by a bi uni uni bi ping pong mechanism.</text>
</comment>
<comment type="similarity">
    <text evidence="1">Belongs to the pantothenate synthetase family.</text>
</comment>
<reference key="1">
    <citation type="journal article" date="2013" name="Proc. Natl. Acad. Sci. U.S.A.">
        <title>Polynucleobacter necessarius, a model for genome reduction in both free-living and symbiotic bacteria.</title>
        <authorList>
            <person name="Boscaro V."/>
            <person name="Felletti M."/>
            <person name="Vannini C."/>
            <person name="Ackerman M.S."/>
            <person name="Chain P.S."/>
            <person name="Malfatti S."/>
            <person name="Vergez L.M."/>
            <person name="Shin M."/>
            <person name="Doak T.G."/>
            <person name="Lynch M."/>
            <person name="Petroni G."/>
        </authorList>
    </citation>
    <scope>NUCLEOTIDE SEQUENCE [LARGE SCALE GENOMIC DNA]</scope>
    <source>
        <strain>STIR1</strain>
    </source>
</reference>
<sequence>MKIISDIQELRDHLRGQNRASFVPTMGNLHEGHLSLMRLARQHGDPVVASIFVNRLQFGPNEDFDSYPRTMQADIDKLEKEGVYILFAPTERDLYPQPQEYRVDPPQQLGDILEGEFRPGFFKGVCTVVLKLFSCVQPKVAVFGKKDYQQLMIIHQMAKQFALPVEIIPGETIRAEDGLALSSRNGYLSAEERAEAPELIKALKEVRQRVLDSNIRDAKTISEIEKLAVASLAGRGWKLDYIAIRQQSNLAPASNEQLQAGDPLVILTAAKLGKTRLIDNLEI</sequence>